<sequence>MYAREYRSTRPHKAIFFHLSCLTLICSAQVYAKPDMRPLGPNIADKGSVFYHFSATSFDSVDGTRHYRVWTAVPNTTAPASGYPILYMLDGNAVMDRLDDELLKQLSEKTPPVIVAVGYQTNLPFDLNSRAYDYTPAAESRKTDLHSGRFSRKSGGSNNFRQLLETRIAPKVEQGLNIDRQRRGLWGHSYGGLFVLDSWLSSSYFRSYYSASPSLGRGYDALLSRVTAVEPLQFCTKHLAIMEGSATQGDNRETHAVGVLSKIHTTLTILKDKGVNAVFWDFPNLGHGPMFNASFRQALLDISGENANYTAGCHELSH</sequence>
<evidence type="ECO:0000255" key="1"/>
<evidence type="ECO:0000269" key="2">
    <source>
    </source>
</evidence>
<evidence type="ECO:0000269" key="3">
    <source>
    </source>
</evidence>
<evidence type="ECO:0000303" key="4">
    <source>
    </source>
</evidence>
<evidence type="ECO:0000303" key="5">
    <source>
    </source>
</evidence>
<evidence type="ECO:0000305" key="6"/>
<evidence type="ECO:0000305" key="7">
    <source>
    </source>
</evidence>
<evidence type="ECO:0000305" key="8">
    <source>
    </source>
</evidence>
<evidence type="ECO:0000312" key="9">
    <source>
        <dbReference type="EMBL" id="AAN79708.1"/>
    </source>
</evidence>
<evidence type="ECO:0007744" key="10">
    <source>
        <dbReference type="PDB" id="2GZR"/>
    </source>
</evidence>
<evidence type="ECO:0007744" key="11">
    <source>
        <dbReference type="PDB" id="2GZS"/>
    </source>
</evidence>
<proteinExistence type="evidence at protein level"/>
<name>IROE_ECOL6</name>
<gene>
    <name evidence="4" type="primary">iroE</name>
    <name evidence="9" type="ordered locus">c1251</name>
</gene>
<accession>A0A0H2V871</accession>
<reference key="1">
    <citation type="journal article" date="2002" name="Proc. Natl. Acad. Sci. U.S.A.">
        <title>Extensive mosaic structure revealed by the complete genome sequence of uropathogenic Escherichia coli.</title>
        <authorList>
            <person name="Welch R.A."/>
            <person name="Burland V."/>
            <person name="Plunkett G. III"/>
            <person name="Redford P."/>
            <person name="Roesch P."/>
            <person name="Rasko D."/>
            <person name="Buckles E.L."/>
            <person name="Liou S.-R."/>
            <person name="Boutin A."/>
            <person name="Hackett J."/>
            <person name="Stroud D."/>
            <person name="Mayhew G.F."/>
            <person name="Rose D.J."/>
            <person name="Zhou S."/>
            <person name="Schwartz D.C."/>
            <person name="Perna N.T."/>
            <person name="Mobley H.L.T."/>
            <person name="Donnenberg M.S."/>
            <person name="Blattner F.R."/>
        </authorList>
    </citation>
    <scope>NUCLEOTIDE SEQUENCE [LARGE SCALE GENOMIC DNA]</scope>
    <source>
        <strain>CFT073 / ATCC 700928 / UPEC</strain>
    </source>
</reference>
<reference key="2">
    <citation type="journal article" date="2005" name="J. Am. Chem. Soc.">
        <title>In vitro characterization of salmochelin and enterobactin trilactone hydrolases IroD, IroE, and Fes.</title>
        <authorList>
            <person name="Lin H."/>
            <person name="Fischbach M.A."/>
            <person name="Liu D.R."/>
            <person name="Walsh C.T."/>
        </authorList>
    </citation>
    <scope>FUNCTION</scope>
    <scope>CATALYTIC ACTIVITY</scope>
    <scope>BIOPHYSICOCHEMICAL PROPERTIES</scope>
    <scope>SUBCELLULAR LOCATION</scope>
    <source>
        <strain>CFT073 / ATCC 700928 / UPEC</strain>
    </source>
</reference>
<reference evidence="10 11" key="3">
    <citation type="journal article" date="2006" name="Biochemistry">
        <title>Structural characterization of enterobactin hydrolase IroE.</title>
        <authorList>
            <person name="Larsen N.A."/>
            <person name="Lin H."/>
            <person name="Wei R."/>
            <person name="Fischbach M.A."/>
            <person name="Walsh C.T."/>
        </authorList>
    </citation>
    <scope>X-RAY CRYSTALLOGRAPHY (1.40 ANGSTROMS) OF 41-318 OF APOENZYME AND IN COMPLEX WITH INHIBITOR DIISOPROPYL FLUOROPHOSPHONATE</scope>
    <scope>SUBUNIT</scope>
    <scope>DOMAIN</scope>
    <scope>ACTIVE SITE</scope>
    <scope>MUTAGENESIS OF ASP-90; ARG-130; SER-189; SER-245; ASP-250; GLU-253 AND HIS-287</scope>
    <source>
        <strain>CFT073 / ATCC 700928 / UPEC</strain>
    </source>
</reference>
<comment type="function">
    <text evidence="2">Catalyzes the hydrolysis of both the apo and Fe3(+)-bound forms of enterobactin (Ent), monoglucosyl-C-Ent (MGE), diglucosyl-C-Ent (DGE) and triglucosyl-C-Ent (TGE). It prefers apo siderophores as substrates and hydrolyzes the Fe3(+)-bound siderophores very inefficiently. Tends to hydrolyze the trilactone just once to produce linearized trimers. May hydrolyze and linearize some or all of apo enterobactins while they are being exported.</text>
</comment>
<comment type="catalytic activity">
    <reaction evidence="2">
        <text>enterobactin + H2O = N-(2,3-dihydroxybenzoyl)-L-serine trimer</text>
        <dbReference type="Rhea" id="RHEA:60384"/>
        <dbReference type="ChEBI" id="CHEBI:15377"/>
        <dbReference type="ChEBI" id="CHEBI:77805"/>
        <dbReference type="ChEBI" id="CHEBI:143020"/>
        <dbReference type="EC" id="3.1.1.107"/>
    </reaction>
    <physiologicalReaction direction="left-to-right" evidence="2">
        <dbReference type="Rhea" id="RHEA:60385"/>
    </physiologicalReaction>
</comment>
<comment type="catalytic activity">
    <reaction evidence="2">
        <text>monoglucosyl-enterobactin + H2O = [N-(2,3-dihydroxybenzoyl)-L-seryl]2-N-(C-5-[deoxy-beta-D-glucosyl]-2,3-dihydroxybenzoyl)-L-serine + H(+)</text>
        <dbReference type="Rhea" id="RHEA:60412"/>
        <dbReference type="ChEBI" id="CHEBI:15377"/>
        <dbReference type="ChEBI" id="CHEBI:15378"/>
        <dbReference type="ChEBI" id="CHEBI:142958"/>
        <dbReference type="ChEBI" id="CHEBI:143023"/>
        <dbReference type="EC" id="3.1.1.107"/>
    </reaction>
    <physiologicalReaction direction="left-to-right" evidence="2">
        <dbReference type="Rhea" id="RHEA:60413"/>
    </physiologicalReaction>
</comment>
<comment type="catalytic activity">
    <reaction evidence="2">
        <text>diglucosyl-enterobactin + H2O = N-(2,3-dihydroxybenzoyl)-L-seryl-[N-(C-5-[deoxy-beta-D-glucosyl]-2,3-dihydroxybenzoyl)-L-serine]2 + H(+)</text>
        <dbReference type="Rhea" id="RHEA:60416"/>
        <dbReference type="ChEBI" id="CHEBI:15377"/>
        <dbReference type="ChEBI" id="CHEBI:15378"/>
        <dbReference type="ChEBI" id="CHEBI:142959"/>
        <dbReference type="ChEBI" id="CHEBI:143022"/>
        <dbReference type="EC" id="3.1.1.107"/>
    </reaction>
    <physiologicalReaction direction="left-to-right" evidence="2">
        <dbReference type="Rhea" id="RHEA:60417"/>
    </physiologicalReaction>
</comment>
<comment type="catalytic activity">
    <reaction evidence="2">
        <text>triglucosyl-enterobactin + H2O = [N-(C-5-[deoxy-beta-D-glucosyl]-2,3-dihydroxybenzoyl)-L-serine]3 + H(+)</text>
        <dbReference type="Rhea" id="RHEA:60420"/>
        <dbReference type="ChEBI" id="CHEBI:15377"/>
        <dbReference type="ChEBI" id="CHEBI:15378"/>
        <dbReference type="ChEBI" id="CHEBI:142960"/>
        <dbReference type="ChEBI" id="CHEBI:143021"/>
        <dbReference type="EC" id="3.1.1.107"/>
    </reaction>
    <physiologicalReaction direction="left-to-right" evidence="2">
        <dbReference type="Rhea" id="RHEA:60421"/>
    </physiologicalReaction>
</comment>
<comment type="biophysicochemical properties">
    <kinetics>
        <KM evidence="2">16 uM for Ent</KM>
        <KM evidence="2">3.4 uM for Fe-Ent</KM>
        <KM evidence="2">29 uM for MGE</KM>
        <KM evidence="2">4.8 uM for Fe-MGE</KM>
        <KM evidence="2">39 uM for DGE</KM>
        <KM evidence="2">4.6 uM for Fe-DGE</KM>
        <KM evidence="2">155 uM for TGE</KM>
        <text evidence="2">kcat is 375 min(-1) with Ent as substrate. kcat is 3.0 min(-1) with Fe-Ent as substrate. kcat is 430 min(-1) with MGE as substrate. kcat is 3.2 min(-1) with Fe-MGE as substrate. kcat is 320 min(-1) with DGE as substrate. kcat is 2.5 min(-1) with Fe-DGE as substrate. kcat is 450 min(-1) with TGE as substrate.</text>
    </kinetics>
</comment>
<comment type="subunit">
    <text evidence="3">Monomer.</text>
</comment>
<comment type="subcellular location">
    <subcellularLocation>
        <location evidence="7">Cell inner membrane</location>
        <topology evidence="1">Single-pass membrane protein</topology>
        <orientation evidence="7">Periplasmic side</orientation>
    </subcellularLocation>
</comment>
<comment type="domain">
    <text evidence="3">Contains a canonical alpha/beta-hydrolase fold with an atypical catalytic dyad.</text>
</comment>
<comment type="similarity">
    <text evidence="6">Belongs to the esterase D family.</text>
</comment>
<dbReference type="EC" id="3.1.1.107" evidence="2"/>
<dbReference type="EMBL" id="AE014075">
    <property type="protein sequence ID" value="AAN79708.1"/>
    <property type="molecule type" value="Genomic_DNA"/>
</dbReference>
<dbReference type="RefSeq" id="WP_000271272.1">
    <property type="nucleotide sequence ID" value="NZ_CP051263.1"/>
</dbReference>
<dbReference type="PDB" id="2GZR">
    <property type="method" value="X-ray"/>
    <property type="resolution" value="2.30 A"/>
    <property type="chains" value="A=41-318"/>
</dbReference>
<dbReference type="PDB" id="2GZS">
    <property type="method" value="X-ray"/>
    <property type="resolution" value="1.40 A"/>
    <property type="chains" value="A=41-318"/>
</dbReference>
<dbReference type="PDBsum" id="2GZR"/>
<dbReference type="PDBsum" id="2GZS"/>
<dbReference type="SMR" id="A0A0H2V871"/>
<dbReference type="STRING" id="199310.c1251"/>
<dbReference type="ESTHER" id="ecoli-IROE">
    <property type="family name" value="A85-IroE-IroD-Fes-Yiel"/>
</dbReference>
<dbReference type="KEGG" id="ecc:c1251"/>
<dbReference type="eggNOG" id="COG2819">
    <property type="taxonomic scope" value="Bacteria"/>
</dbReference>
<dbReference type="HOGENOM" id="CLU_039834_3_2_6"/>
<dbReference type="BioCyc" id="MetaCyc:MONOMER-20654"/>
<dbReference type="BRENDA" id="3.1.1.107">
    <property type="organism ID" value="2026"/>
</dbReference>
<dbReference type="Proteomes" id="UP000001410">
    <property type="component" value="Chromosome"/>
</dbReference>
<dbReference type="GO" id="GO:0005886">
    <property type="term" value="C:plasma membrane"/>
    <property type="evidence" value="ECO:0007669"/>
    <property type="project" value="UniProtKB-SubCell"/>
</dbReference>
<dbReference type="GO" id="GO:0052689">
    <property type="term" value="F:carboxylic ester hydrolase activity"/>
    <property type="evidence" value="ECO:0007669"/>
    <property type="project" value="UniProtKB-KW"/>
</dbReference>
<dbReference type="Gene3D" id="3.40.50.1820">
    <property type="entry name" value="alpha/beta hydrolase"/>
    <property type="match status" value="1"/>
</dbReference>
<dbReference type="InterPro" id="IPR029058">
    <property type="entry name" value="AB_hydrolase_fold"/>
</dbReference>
<dbReference type="InterPro" id="IPR000801">
    <property type="entry name" value="Esterase-like"/>
</dbReference>
<dbReference type="InterPro" id="IPR052558">
    <property type="entry name" value="Siderophore_Hydrolase_D"/>
</dbReference>
<dbReference type="PANTHER" id="PTHR40841">
    <property type="entry name" value="SIDEROPHORE TRIACETYLFUSARININE C ESTERASE"/>
    <property type="match status" value="1"/>
</dbReference>
<dbReference type="PANTHER" id="PTHR40841:SF2">
    <property type="entry name" value="SIDEROPHORE-DEGRADING ESTERASE (EUROFUNG)"/>
    <property type="match status" value="1"/>
</dbReference>
<dbReference type="Pfam" id="PF00756">
    <property type="entry name" value="Esterase"/>
    <property type="match status" value="1"/>
</dbReference>
<dbReference type="SUPFAM" id="SSF53474">
    <property type="entry name" value="alpha/beta-Hydrolases"/>
    <property type="match status" value="1"/>
</dbReference>
<protein>
    <recommendedName>
        <fullName evidence="6">Apo-salmochelin esterase</fullName>
        <ecNumber evidence="2">3.1.1.107</ecNumber>
    </recommendedName>
    <alternativeName>
        <fullName evidence="5">Enterobactin hydrolase IroE</fullName>
    </alternativeName>
</protein>
<organism>
    <name type="scientific">Escherichia coli O6:H1 (strain CFT073 / ATCC 700928 / UPEC)</name>
    <dbReference type="NCBI Taxonomy" id="199310"/>
    <lineage>
        <taxon>Bacteria</taxon>
        <taxon>Pseudomonadati</taxon>
        <taxon>Pseudomonadota</taxon>
        <taxon>Gammaproteobacteria</taxon>
        <taxon>Enterobacterales</taxon>
        <taxon>Enterobacteriaceae</taxon>
        <taxon>Escherichia</taxon>
    </lineage>
</organism>
<feature type="chain" id="PRO_5002599607" description="Apo-salmochelin esterase">
    <location>
        <begin position="1"/>
        <end position="318"/>
    </location>
</feature>
<feature type="transmembrane region" description="Helical" evidence="1">
    <location>
        <begin position="13"/>
        <end position="32"/>
    </location>
</feature>
<feature type="active site" evidence="8">
    <location>
        <position position="189"/>
    </location>
</feature>
<feature type="active site" evidence="8">
    <location>
        <position position="287"/>
    </location>
</feature>
<feature type="mutagenesis site" description="Loss of activity." evidence="3">
    <original>D</original>
    <variation>A</variation>
    <variation>N</variation>
    <location>
        <position position="90"/>
    </location>
</feature>
<feature type="mutagenesis site" description="Loss of activity." evidence="3">
    <original>R</original>
    <variation>K</variation>
    <variation>Q</variation>
    <location>
        <position position="130"/>
    </location>
</feature>
<feature type="mutagenesis site" description="Loss of activity." evidence="3">
    <original>S</original>
    <variation>A</variation>
    <location>
        <position position="189"/>
    </location>
</feature>
<feature type="mutagenesis site" description="Retains 60% of activity." evidence="3">
    <original>S</original>
    <variation>D</variation>
    <location>
        <position position="245"/>
    </location>
</feature>
<feature type="mutagenesis site" description="Retains 84% of activity." evidence="3">
    <original>S</original>
    <variation>E</variation>
    <location>
        <position position="245"/>
    </location>
</feature>
<feature type="mutagenesis site" description="Retains 59% of activity." evidence="3">
    <original>D</original>
    <variation>A</variation>
    <location>
        <position position="250"/>
    </location>
</feature>
<feature type="mutagenesis site" description="Retains 72% of activity." evidence="3">
    <original>D</original>
    <variation>N</variation>
    <location>
        <position position="250"/>
    </location>
</feature>
<feature type="mutagenesis site" description="Retains 78% of activity." evidence="3">
    <original>E</original>
    <variation>A</variation>
    <location>
        <position position="253"/>
    </location>
</feature>
<feature type="mutagenesis site" description="Retains 92% of activity." evidence="3">
    <original>E</original>
    <variation>Q</variation>
    <location>
        <position position="253"/>
    </location>
</feature>
<feature type="mutagenesis site" description="Loss of activity." evidence="3">
    <original>H</original>
    <variation>A</variation>
    <location>
        <position position="287"/>
    </location>
</feature>
<keyword id="KW-0002">3D-structure</keyword>
<keyword id="KW-0997">Cell inner membrane</keyword>
<keyword id="KW-1003">Cell membrane</keyword>
<keyword id="KW-0378">Hydrolase</keyword>
<keyword id="KW-0472">Membrane</keyword>
<keyword id="KW-1185">Reference proteome</keyword>
<keyword id="KW-0719">Serine esterase</keyword>
<keyword id="KW-0812">Transmembrane</keyword>
<keyword id="KW-1133">Transmembrane helix</keyword>